<keyword id="KW-0067">ATP-binding</keyword>
<keyword id="KW-0507">mRNA processing</keyword>
<keyword id="KW-0547">Nucleotide-binding</keyword>
<keyword id="KW-0539">Nucleus</keyword>
<keyword id="KW-1185">Reference proteome</keyword>
<feature type="chain" id="PRO_0000375173" description="Protein clpf-1">
    <location>
        <begin position="1"/>
        <end position="428"/>
    </location>
</feature>
<feature type="region of interest" description="Disordered" evidence="2">
    <location>
        <begin position="99"/>
        <end position="118"/>
    </location>
</feature>
<feature type="binding site" evidence="1">
    <location>
        <position position="16"/>
    </location>
    <ligand>
        <name>ATP</name>
        <dbReference type="ChEBI" id="CHEBI:30616"/>
    </ligand>
</feature>
<feature type="binding site" evidence="1">
    <location>
        <position position="56"/>
    </location>
    <ligand>
        <name>ATP</name>
        <dbReference type="ChEBI" id="CHEBI:30616"/>
    </ligand>
</feature>
<feature type="binding site" evidence="1">
    <location>
        <begin position="124"/>
        <end position="129"/>
    </location>
    <ligand>
        <name>ATP</name>
        <dbReference type="ChEBI" id="CHEBI:30616"/>
    </ligand>
</feature>
<comment type="function">
    <text evidence="1">Required for endonucleolytic cleavage during polyadenylation-dependent pre-mRNA 3'-end formation.</text>
</comment>
<comment type="subcellular location">
    <subcellularLocation>
        <location evidence="1">Nucleus</location>
    </subcellularLocation>
</comment>
<comment type="similarity">
    <text evidence="1">Belongs to the Clp1 family. Clp1 subfamily.</text>
</comment>
<evidence type="ECO:0000255" key="1">
    <source>
        <dbReference type="HAMAP-Rule" id="MF_03035"/>
    </source>
</evidence>
<evidence type="ECO:0000256" key="2">
    <source>
        <dbReference type="SAM" id="MobiDB-lite"/>
    </source>
</evidence>
<protein>
    <recommendedName>
        <fullName evidence="1">Protein clpf-1</fullName>
    </recommendedName>
</protein>
<dbReference type="EMBL" id="HE601459">
    <property type="protein sequence ID" value="CAP29409.2"/>
    <property type="molecule type" value="Genomic_DNA"/>
</dbReference>
<dbReference type="SMR" id="A8X9U4"/>
<dbReference type="FunCoup" id="A8X9U4">
    <property type="interactions" value="2411"/>
</dbReference>
<dbReference type="STRING" id="6238.A8X9U4"/>
<dbReference type="EnsemblMetazoa" id="CBG09862.1">
    <property type="protein sequence ID" value="CBG09862.1"/>
    <property type="gene ID" value="WBGene00031378"/>
</dbReference>
<dbReference type="WormBase" id="CBG09862">
    <property type="protein sequence ID" value="CBP29108"/>
    <property type="gene ID" value="WBGene00031378"/>
    <property type="gene designation" value="Cbr-clpf-1"/>
</dbReference>
<dbReference type="eggNOG" id="KOG2749">
    <property type="taxonomic scope" value="Eukaryota"/>
</dbReference>
<dbReference type="HOGENOM" id="CLU_018195_1_0_1"/>
<dbReference type="InParanoid" id="A8X9U4"/>
<dbReference type="OMA" id="VQYVNCH"/>
<dbReference type="OrthoDB" id="258143at2759"/>
<dbReference type="Proteomes" id="UP000008549">
    <property type="component" value="Unassembled WGS sequence"/>
</dbReference>
<dbReference type="GO" id="GO:0005849">
    <property type="term" value="C:mRNA cleavage factor complex"/>
    <property type="evidence" value="ECO:0007669"/>
    <property type="project" value="InterPro"/>
</dbReference>
<dbReference type="GO" id="GO:0005634">
    <property type="term" value="C:nucleus"/>
    <property type="evidence" value="ECO:0000318"/>
    <property type="project" value="GO_Central"/>
</dbReference>
<dbReference type="GO" id="GO:0005524">
    <property type="term" value="F:ATP binding"/>
    <property type="evidence" value="ECO:0007669"/>
    <property type="project" value="UniProtKB-UniRule"/>
</dbReference>
<dbReference type="GO" id="GO:0051731">
    <property type="term" value="F:polynucleotide 5'-hydroxyl-kinase activity"/>
    <property type="evidence" value="ECO:0000318"/>
    <property type="project" value="GO_Central"/>
</dbReference>
<dbReference type="GO" id="GO:0031124">
    <property type="term" value="P:mRNA 3'-end processing"/>
    <property type="evidence" value="ECO:0007669"/>
    <property type="project" value="UniProtKB-UniRule"/>
</dbReference>
<dbReference type="GO" id="GO:0006388">
    <property type="term" value="P:tRNA splicing, via endonucleolytic cleavage and ligation"/>
    <property type="evidence" value="ECO:0000318"/>
    <property type="project" value="GO_Central"/>
</dbReference>
<dbReference type="CDD" id="cd01983">
    <property type="entry name" value="SIMIBI"/>
    <property type="match status" value="1"/>
</dbReference>
<dbReference type="FunFam" id="2.40.30.330:FF:000002">
    <property type="entry name" value="Protein CLP1 homolog"/>
    <property type="match status" value="1"/>
</dbReference>
<dbReference type="FunFam" id="3.40.50.300:FF:000454">
    <property type="entry name" value="Protein CLP1 homolog"/>
    <property type="match status" value="1"/>
</dbReference>
<dbReference type="FunFam" id="2.60.120.1030:FF:000001">
    <property type="entry name" value="Protein CLP1 homolog 5"/>
    <property type="match status" value="1"/>
</dbReference>
<dbReference type="Gene3D" id="2.60.120.1030">
    <property type="entry name" value="Clp1, DNA binding domain"/>
    <property type="match status" value="1"/>
</dbReference>
<dbReference type="Gene3D" id="3.40.50.300">
    <property type="entry name" value="P-loop containing nucleotide triphosphate hydrolases"/>
    <property type="match status" value="1"/>
</dbReference>
<dbReference type="Gene3D" id="2.40.30.330">
    <property type="entry name" value="Pre-mRNA cleavage complex subunit Clp1, C-terminal domain"/>
    <property type="match status" value="1"/>
</dbReference>
<dbReference type="HAMAP" id="MF_03035">
    <property type="entry name" value="Clp1"/>
    <property type="match status" value="1"/>
</dbReference>
<dbReference type="InterPro" id="IPR028606">
    <property type="entry name" value="Clp1"/>
</dbReference>
<dbReference type="InterPro" id="IPR045116">
    <property type="entry name" value="Clp1/Grc3"/>
</dbReference>
<dbReference type="InterPro" id="IPR010655">
    <property type="entry name" value="Clp1_C"/>
</dbReference>
<dbReference type="InterPro" id="IPR038238">
    <property type="entry name" value="Clp1_C_sf"/>
</dbReference>
<dbReference type="InterPro" id="IPR032324">
    <property type="entry name" value="Clp1_N"/>
</dbReference>
<dbReference type="InterPro" id="IPR038239">
    <property type="entry name" value="Clp1_N_sf"/>
</dbReference>
<dbReference type="InterPro" id="IPR032319">
    <property type="entry name" value="CLP1_P"/>
</dbReference>
<dbReference type="InterPro" id="IPR027417">
    <property type="entry name" value="P-loop_NTPase"/>
</dbReference>
<dbReference type="PANTHER" id="PTHR12755">
    <property type="entry name" value="CLEAVAGE/POLYADENYLATION FACTOR IA SUBUNIT CLP1P"/>
    <property type="match status" value="1"/>
</dbReference>
<dbReference type="PANTHER" id="PTHR12755:SF6">
    <property type="entry name" value="POLYRIBONUCLEOTIDE 5'-HYDROXYL-KINASE CLP1"/>
    <property type="match status" value="1"/>
</dbReference>
<dbReference type="Pfam" id="PF06807">
    <property type="entry name" value="Clp1"/>
    <property type="match status" value="1"/>
</dbReference>
<dbReference type="Pfam" id="PF16573">
    <property type="entry name" value="CLP1_N"/>
    <property type="match status" value="1"/>
</dbReference>
<dbReference type="Pfam" id="PF16575">
    <property type="entry name" value="CLP1_P"/>
    <property type="match status" value="1"/>
</dbReference>
<dbReference type="SUPFAM" id="SSF52540">
    <property type="entry name" value="P-loop containing nucleoside triphosphate hydrolases"/>
    <property type="match status" value="1"/>
</dbReference>
<reference key="1">
    <citation type="journal article" date="2003" name="PLoS Biol.">
        <title>The genome sequence of Caenorhabditis briggsae: a platform for comparative genomics.</title>
        <authorList>
            <person name="Stein L.D."/>
            <person name="Bao Z."/>
            <person name="Blasiar D."/>
            <person name="Blumenthal T."/>
            <person name="Brent M.R."/>
            <person name="Chen N."/>
            <person name="Chinwalla A."/>
            <person name="Clarke L."/>
            <person name="Clee C."/>
            <person name="Coghlan A."/>
            <person name="Coulson A."/>
            <person name="D'Eustachio P."/>
            <person name="Fitch D.H.A."/>
            <person name="Fulton L.A."/>
            <person name="Fulton R.E."/>
            <person name="Griffiths-Jones S."/>
            <person name="Harris T.W."/>
            <person name="Hillier L.W."/>
            <person name="Kamath R."/>
            <person name="Kuwabara P.E."/>
            <person name="Mardis E.R."/>
            <person name="Marra M.A."/>
            <person name="Miner T.L."/>
            <person name="Minx P."/>
            <person name="Mullikin J.C."/>
            <person name="Plumb R.W."/>
            <person name="Rogers J."/>
            <person name="Schein J.E."/>
            <person name="Sohrmann M."/>
            <person name="Spieth J."/>
            <person name="Stajich J.E."/>
            <person name="Wei C."/>
            <person name="Willey D."/>
            <person name="Wilson R.K."/>
            <person name="Durbin R.M."/>
            <person name="Waterston R.H."/>
        </authorList>
    </citation>
    <scope>NUCLEOTIDE SEQUENCE [LARGE SCALE GENOMIC DNA]</scope>
    <source>
        <strain>AF16</strain>
    </source>
</reference>
<accession>A8X9U4</accession>
<gene>
    <name evidence="1" type="primary">clpf-1</name>
    <name type="ORF">CBG09862</name>
</gene>
<organism>
    <name type="scientific">Caenorhabditis briggsae</name>
    <dbReference type="NCBI Taxonomy" id="6238"/>
    <lineage>
        <taxon>Eukaryota</taxon>
        <taxon>Metazoa</taxon>
        <taxon>Ecdysozoa</taxon>
        <taxon>Nematoda</taxon>
        <taxon>Chromadorea</taxon>
        <taxon>Rhabditida</taxon>
        <taxon>Rhabditina</taxon>
        <taxon>Rhabditomorpha</taxon>
        <taxon>Rhabditoidea</taxon>
        <taxon>Rhabditidae</taxon>
        <taxon>Peloderinae</taxon>
        <taxon>Caenorhabditis</taxon>
    </lineage>
</organism>
<proteinExistence type="inferred from homology"/>
<sequence>MGEEQVQEFKLKEDCELRFAAGEDSEVVLELVHGYAEIFGTEIILNKKYNFPAKSRVAVFTWKSATIELVGATESAYVAESTPMVIYLNIHAAMEESRKKREEQAVSNSSKPKGPRLLLVGPQDVGKTTVSRILCNYSVRHGRTPILVDLDVGQNSVSVPGSVAALLVQKTADVVDGFERNMPIVYNFGHSSPSQNLSLYETLFKALASTINSQIEQNDEARLGGMIINTCGWVDGEGYKCIVKAASAFEVDVVIVLDHERLYSDLSKELPEFVRLTHVPKSGGVEQRTAQIRSATRGENVHRYFYGTRANNLFPFTFDVPFDTVTLCKIGAEQLPDSCLPFGMEVENHETKIIIIEPSVEIKHHLFSFSRGSIAEKNVLTSSVWGFCLITEVDMEKRTISILCPQNTIPSKTLVYSEVTHLDDQIER</sequence>
<name>CLP1_CAEBR</name>